<feature type="chain" id="PRO_0000167913" description="Small ribosomal subunit protein bS20">
    <location>
        <begin position="1"/>
        <end position="85"/>
    </location>
</feature>
<feature type="region of interest" description="Disordered" evidence="2">
    <location>
        <begin position="1"/>
        <end position="25"/>
    </location>
</feature>
<proteinExistence type="inferred from homology"/>
<dbReference type="EMBL" id="CP000001">
    <property type="protein sequence ID" value="AAU16199.1"/>
    <property type="status" value="ALT_INIT"/>
    <property type="molecule type" value="Genomic_DNA"/>
</dbReference>
<dbReference type="RefSeq" id="WP_001274011.1">
    <property type="nucleotide sequence ID" value="NZ_CP009968.1"/>
</dbReference>
<dbReference type="SMR" id="Q634L9"/>
<dbReference type="GeneID" id="93006778"/>
<dbReference type="KEGG" id="bcz:BCE33L4069"/>
<dbReference type="PATRIC" id="fig|288681.22.peg.1321"/>
<dbReference type="Proteomes" id="UP000002612">
    <property type="component" value="Chromosome"/>
</dbReference>
<dbReference type="GO" id="GO:0005829">
    <property type="term" value="C:cytosol"/>
    <property type="evidence" value="ECO:0007669"/>
    <property type="project" value="TreeGrafter"/>
</dbReference>
<dbReference type="GO" id="GO:0015935">
    <property type="term" value="C:small ribosomal subunit"/>
    <property type="evidence" value="ECO:0007669"/>
    <property type="project" value="TreeGrafter"/>
</dbReference>
<dbReference type="GO" id="GO:0070181">
    <property type="term" value="F:small ribosomal subunit rRNA binding"/>
    <property type="evidence" value="ECO:0007669"/>
    <property type="project" value="TreeGrafter"/>
</dbReference>
<dbReference type="GO" id="GO:0003735">
    <property type="term" value="F:structural constituent of ribosome"/>
    <property type="evidence" value="ECO:0007669"/>
    <property type="project" value="InterPro"/>
</dbReference>
<dbReference type="GO" id="GO:0006412">
    <property type="term" value="P:translation"/>
    <property type="evidence" value="ECO:0007669"/>
    <property type="project" value="UniProtKB-UniRule"/>
</dbReference>
<dbReference type="FunFam" id="1.20.58.110:FF:000001">
    <property type="entry name" value="30S ribosomal protein S20"/>
    <property type="match status" value="1"/>
</dbReference>
<dbReference type="Gene3D" id="1.20.58.110">
    <property type="entry name" value="Ribosomal protein S20"/>
    <property type="match status" value="1"/>
</dbReference>
<dbReference type="HAMAP" id="MF_00500">
    <property type="entry name" value="Ribosomal_bS20"/>
    <property type="match status" value="1"/>
</dbReference>
<dbReference type="InterPro" id="IPR002583">
    <property type="entry name" value="Ribosomal_bS20"/>
</dbReference>
<dbReference type="InterPro" id="IPR036510">
    <property type="entry name" value="Ribosomal_bS20_sf"/>
</dbReference>
<dbReference type="NCBIfam" id="TIGR00029">
    <property type="entry name" value="S20"/>
    <property type="match status" value="1"/>
</dbReference>
<dbReference type="PANTHER" id="PTHR33398">
    <property type="entry name" value="30S RIBOSOMAL PROTEIN S20"/>
    <property type="match status" value="1"/>
</dbReference>
<dbReference type="PANTHER" id="PTHR33398:SF1">
    <property type="entry name" value="SMALL RIBOSOMAL SUBUNIT PROTEIN BS20C"/>
    <property type="match status" value="1"/>
</dbReference>
<dbReference type="Pfam" id="PF01649">
    <property type="entry name" value="Ribosomal_S20p"/>
    <property type="match status" value="1"/>
</dbReference>
<dbReference type="SUPFAM" id="SSF46992">
    <property type="entry name" value="Ribosomal protein S20"/>
    <property type="match status" value="1"/>
</dbReference>
<protein>
    <recommendedName>
        <fullName evidence="1">Small ribosomal subunit protein bS20</fullName>
    </recommendedName>
    <alternativeName>
        <fullName evidence="3">30S ribosomal protein S20</fullName>
    </alternativeName>
</protein>
<organism>
    <name type="scientific">Bacillus cereus (strain ZK / E33L)</name>
    <dbReference type="NCBI Taxonomy" id="288681"/>
    <lineage>
        <taxon>Bacteria</taxon>
        <taxon>Bacillati</taxon>
        <taxon>Bacillota</taxon>
        <taxon>Bacilli</taxon>
        <taxon>Bacillales</taxon>
        <taxon>Bacillaceae</taxon>
        <taxon>Bacillus</taxon>
        <taxon>Bacillus cereus group</taxon>
    </lineage>
</organism>
<evidence type="ECO:0000255" key="1">
    <source>
        <dbReference type="HAMAP-Rule" id="MF_00500"/>
    </source>
</evidence>
<evidence type="ECO:0000256" key="2">
    <source>
        <dbReference type="SAM" id="MobiDB-lite"/>
    </source>
</evidence>
<evidence type="ECO:0000305" key="3"/>
<accession>Q634L9</accession>
<name>RS20_BACCZ</name>
<reference key="1">
    <citation type="journal article" date="2006" name="J. Bacteriol.">
        <title>Pathogenomic sequence analysis of Bacillus cereus and Bacillus thuringiensis isolates closely related to Bacillus anthracis.</title>
        <authorList>
            <person name="Han C.S."/>
            <person name="Xie G."/>
            <person name="Challacombe J.F."/>
            <person name="Altherr M.R."/>
            <person name="Bhotika S.S."/>
            <person name="Bruce D."/>
            <person name="Campbell C.S."/>
            <person name="Campbell M.L."/>
            <person name="Chen J."/>
            <person name="Chertkov O."/>
            <person name="Cleland C."/>
            <person name="Dimitrijevic M."/>
            <person name="Doggett N.A."/>
            <person name="Fawcett J.J."/>
            <person name="Glavina T."/>
            <person name="Goodwin L.A."/>
            <person name="Hill K.K."/>
            <person name="Hitchcock P."/>
            <person name="Jackson P.J."/>
            <person name="Keim P."/>
            <person name="Kewalramani A.R."/>
            <person name="Longmire J."/>
            <person name="Lucas S."/>
            <person name="Malfatti S."/>
            <person name="McMurry K."/>
            <person name="Meincke L.J."/>
            <person name="Misra M."/>
            <person name="Moseman B.L."/>
            <person name="Mundt M."/>
            <person name="Munk A.C."/>
            <person name="Okinaka R.T."/>
            <person name="Parson-Quintana B."/>
            <person name="Reilly L.P."/>
            <person name="Richardson P."/>
            <person name="Robinson D.L."/>
            <person name="Rubin E."/>
            <person name="Saunders E."/>
            <person name="Tapia R."/>
            <person name="Tesmer J.G."/>
            <person name="Thayer N."/>
            <person name="Thompson L.S."/>
            <person name="Tice H."/>
            <person name="Ticknor L.O."/>
            <person name="Wills P.L."/>
            <person name="Brettin T.S."/>
            <person name="Gilna P."/>
        </authorList>
    </citation>
    <scope>NUCLEOTIDE SEQUENCE [LARGE SCALE GENOMIC DNA]</scope>
    <source>
        <strain>ZK / E33L</strain>
    </source>
</reference>
<sequence length="85" mass="9342">MANIKSAIKRAKLSEERRAHNASIKSDMRSAVKTVEALVTNNDLENAKEAFKTASKKLDKAARKGLIHQNAAARQKSRLAKQVNA</sequence>
<keyword id="KW-0687">Ribonucleoprotein</keyword>
<keyword id="KW-0689">Ribosomal protein</keyword>
<keyword id="KW-0694">RNA-binding</keyword>
<keyword id="KW-0699">rRNA-binding</keyword>
<gene>
    <name evidence="1" type="primary">rpsT</name>
    <name type="ordered locus">BCE33L4069</name>
</gene>
<comment type="function">
    <text evidence="1">Binds directly to 16S ribosomal RNA.</text>
</comment>
<comment type="similarity">
    <text evidence="1">Belongs to the bacterial ribosomal protein bS20 family.</text>
</comment>
<comment type="sequence caution" evidence="3">
    <conflict type="erroneous initiation">
        <sequence resource="EMBL-CDS" id="AAU16199"/>
    </conflict>
</comment>